<dbReference type="EC" id="7.1.2.2" evidence="2"/>
<dbReference type="EMBL" id="AP009368">
    <property type="protein sequence ID" value="BAF49946.1"/>
    <property type="molecule type" value="Genomic_DNA"/>
</dbReference>
<dbReference type="RefSeq" id="YP_001123122.1">
    <property type="nucleotide sequence ID" value="NC_009267.1"/>
</dbReference>
<dbReference type="SMR" id="A4QJU0"/>
<dbReference type="GeneID" id="4962429"/>
<dbReference type="GO" id="GO:0009535">
    <property type="term" value="C:chloroplast thylakoid membrane"/>
    <property type="evidence" value="ECO:0007669"/>
    <property type="project" value="UniProtKB-SubCell"/>
</dbReference>
<dbReference type="GO" id="GO:0005739">
    <property type="term" value="C:mitochondrion"/>
    <property type="evidence" value="ECO:0007669"/>
    <property type="project" value="GOC"/>
</dbReference>
<dbReference type="GO" id="GO:0045259">
    <property type="term" value="C:proton-transporting ATP synthase complex"/>
    <property type="evidence" value="ECO:0007669"/>
    <property type="project" value="UniProtKB-KW"/>
</dbReference>
<dbReference type="GO" id="GO:0005524">
    <property type="term" value="F:ATP binding"/>
    <property type="evidence" value="ECO:0007669"/>
    <property type="project" value="UniProtKB-UniRule"/>
</dbReference>
<dbReference type="GO" id="GO:0016887">
    <property type="term" value="F:ATP hydrolysis activity"/>
    <property type="evidence" value="ECO:0007669"/>
    <property type="project" value="InterPro"/>
</dbReference>
<dbReference type="GO" id="GO:0046933">
    <property type="term" value="F:proton-transporting ATP synthase activity, rotational mechanism"/>
    <property type="evidence" value="ECO:0007669"/>
    <property type="project" value="UniProtKB-UniRule"/>
</dbReference>
<dbReference type="GO" id="GO:0042776">
    <property type="term" value="P:proton motive force-driven mitochondrial ATP synthesis"/>
    <property type="evidence" value="ECO:0007669"/>
    <property type="project" value="TreeGrafter"/>
</dbReference>
<dbReference type="CDD" id="cd18110">
    <property type="entry name" value="ATP-synt_F1_beta_C"/>
    <property type="match status" value="1"/>
</dbReference>
<dbReference type="CDD" id="cd18115">
    <property type="entry name" value="ATP-synt_F1_beta_N"/>
    <property type="match status" value="1"/>
</dbReference>
<dbReference type="CDD" id="cd01133">
    <property type="entry name" value="F1-ATPase_beta_CD"/>
    <property type="match status" value="1"/>
</dbReference>
<dbReference type="FunFam" id="1.10.1140.10:FF:000001">
    <property type="entry name" value="ATP synthase subunit beta"/>
    <property type="match status" value="1"/>
</dbReference>
<dbReference type="FunFam" id="3.40.50.12240:FF:000006">
    <property type="entry name" value="ATP synthase subunit beta"/>
    <property type="match status" value="1"/>
</dbReference>
<dbReference type="FunFam" id="3.40.50.300:FF:000026">
    <property type="entry name" value="ATP synthase subunit beta"/>
    <property type="match status" value="1"/>
</dbReference>
<dbReference type="FunFam" id="2.40.10.170:FF:000002">
    <property type="entry name" value="ATP synthase subunit beta, chloroplastic"/>
    <property type="match status" value="1"/>
</dbReference>
<dbReference type="Gene3D" id="2.40.10.170">
    <property type="match status" value="1"/>
</dbReference>
<dbReference type="Gene3D" id="1.10.1140.10">
    <property type="entry name" value="Bovine Mitochondrial F1-atpase, Atp Synthase Beta Chain, Chain D, domain 3"/>
    <property type="match status" value="1"/>
</dbReference>
<dbReference type="Gene3D" id="3.40.50.300">
    <property type="entry name" value="P-loop containing nucleotide triphosphate hydrolases"/>
    <property type="match status" value="1"/>
</dbReference>
<dbReference type="HAMAP" id="MF_01347">
    <property type="entry name" value="ATP_synth_beta_bact"/>
    <property type="match status" value="1"/>
</dbReference>
<dbReference type="InterPro" id="IPR003593">
    <property type="entry name" value="AAA+_ATPase"/>
</dbReference>
<dbReference type="InterPro" id="IPR055190">
    <property type="entry name" value="ATP-synt_VA_C"/>
</dbReference>
<dbReference type="InterPro" id="IPR005722">
    <property type="entry name" value="ATP_synth_F1_bsu"/>
</dbReference>
<dbReference type="InterPro" id="IPR020003">
    <property type="entry name" value="ATPase_a/bsu_AS"/>
</dbReference>
<dbReference type="InterPro" id="IPR050053">
    <property type="entry name" value="ATPase_alpha/beta_chains"/>
</dbReference>
<dbReference type="InterPro" id="IPR004100">
    <property type="entry name" value="ATPase_F1/V1/A1_a/bsu_N"/>
</dbReference>
<dbReference type="InterPro" id="IPR036121">
    <property type="entry name" value="ATPase_F1/V1/A1_a/bsu_N_sf"/>
</dbReference>
<dbReference type="InterPro" id="IPR000194">
    <property type="entry name" value="ATPase_F1/V1/A1_a/bsu_nucl-bd"/>
</dbReference>
<dbReference type="InterPro" id="IPR024034">
    <property type="entry name" value="ATPase_F1/V1_b/a_C"/>
</dbReference>
<dbReference type="InterPro" id="IPR027417">
    <property type="entry name" value="P-loop_NTPase"/>
</dbReference>
<dbReference type="NCBIfam" id="TIGR01039">
    <property type="entry name" value="atpD"/>
    <property type="match status" value="1"/>
</dbReference>
<dbReference type="PANTHER" id="PTHR15184">
    <property type="entry name" value="ATP SYNTHASE"/>
    <property type="match status" value="1"/>
</dbReference>
<dbReference type="PANTHER" id="PTHR15184:SF71">
    <property type="entry name" value="ATP SYNTHASE SUBUNIT BETA, MITOCHONDRIAL"/>
    <property type="match status" value="1"/>
</dbReference>
<dbReference type="Pfam" id="PF00006">
    <property type="entry name" value="ATP-synt_ab"/>
    <property type="match status" value="1"/>
</dbReference>
<dbReference type="Pfam" id="PF02874">
    <property type="entry name" value="ATP-synt_ab_N"/>
    <property type="match status" value="1"/>
</dbReference>
<dbReference type="Pfam" id="PF22919">
    <property type="entry name" value="ATP-synt_VA_C"/>
    <property type="match status" value="1"/>
</dbReference>
<dbReference type="SMART" id="SM00382">
    <property type="entry name" value="AAA"/>
    <property type="match status" value="1"/>
</dbReference>
<dbReference type="SUPFAM" id="SSF47917">
    <property type="entry name" value="C-terminal domain of alpha and beta subunits of F1 ATP synthase"/>
    <property type="match status" value="1"/>
</dbReference>
<dbReference type="SUPFAM" id="SSF50615">
    <property type="entry name" value="N-terminal domain of alpha and beta subunits of F1 ATP synthase"/>
    <property type="match status" value="1"/>
</dbReference>
<dbReference type="SUPFAM" id="SSF52540">
    <property type="entry name" value="P-loop containing nucleoside triphosphate hydrolases"/>
    <property type="match status" value="1"/>
</dbReference>
<dbReference type="PROSITE" id="PS00152">
    <property type="entry name" value="ATPASE_ALPHA_BETA"/>
    <property type="match status" value="1"/>
</dbReference>
<accession>A4QJU0</accession>
<keyword id="KW-0066">ATP synthesis</keyword>
<keyword id="KW-0067">ATP-binding</keyword>
<keyword id="KW-0139">CF(1)</keyword>
<keyword id="KW-0150">Chloroplast</keyword>
<keyword id="KW-0375">Hydrogen ion transport</keyword>
<keyword id="KW-0406">Ion transport</keyword>
<keyword id="KW-0472">Membrane</keyword>
<keyword id="KW-0547">Nucleotide-binding</keyword>
<keyword id="KW-0597">Phosphoprotein</keyword>
<keyword id="KW-0934">Plastid</keyword>
<keyword id="KW-0793">Thylakoid</keyword>
<keyword id="KW-1278">Translocase</keyword>
<keyword id="KW-0813">Transport</keyword>
<sequence length="498" mass="53976">MRINPTTSDPEVSIREKKNLGRISQIIGPVLDVAFPPGKMPNIYNALVVKGRDTLGQEINVTCEVQQLLGNNRVRAVAMSATEGLKRGMDVVDMGNPLSVPVGGATLGRIFNVLGEPVDNLGPVDTRTTSPIHKSAPAFIQLDTKLSIFETGIKVVDLLAPYRRGGKIGLFGGAGVGKTVLIMELINNIAKAHGGVSVFGGVGERTREGNDLYMEMKESGVINEQNLAESKVALVYGQMNEPPGARMRVGLTALTMAEYFRDVNEQDVLLFIDNIFRFVQAGSEVSALLGRMPSAVGYQPTLSTEMGTLQERITSTKKGSITSIQAVYVPADDLTDPAPATTFAHLDATTVLSRGLAAKGIYPAVDPLDSTSTMLQPRIVGEEHYETAQQVKQTLQRYKELQDIIAILGLDELSEEDRLTVARARKIERFLSQPFFVAEVFTGSPGKYVGLAETIRGFKLILSGEFDSLPEQAFYLVGNIDEATAKATNLEMESKLKK</sequence>
<feature type="chain" id="PRO_0000339635" description="ATP synthase subunit beta, chloroplastic">
    <location>
        <begin position="1"/>
        <end position="498"/>
    </location>
</feature>
<feature type="binding site" evidence="2">
    <location>
        <begin position="172"/>
        <end position="179"/>
    </location>
    <ligand>
        <name>ATP</name>
        <dbReference type="ChEBI" id="CHEBI:30616"/>
    </ligand>
</feature>
<feature type="modified residue" description="Phosphothreonine" evidence="1">
    <location>
        <position position="6"/>
    </location>
</feature>
<feature type="modified residue" description="Phosphoserine" evidence="1">
    <location>
        <position position="13"/>
    </location>
</feature>
<gene>
    <name evidence="2" type="primary">atpB</name>
</gene>
<organism>
    <name type="scientific">Olimarabidopsis pumila</name>
    <name type="common">Dwarf rocket</name>
    <name type="synonym">Arabidopsis griffithiana</name>
    <dbReference type="NCBI Taxonomy" id="74718"/>
    <lineage>
        <taxon>Eukaryota</taxon>
        <taxon>Viridiplantae</taxon>
        <taxon>Streptophyta</taxon>
        <taxon>Embryophyta</taxon>
        <taxon>Tracheophyta</taxon>
        <taxon>Spermatophyta</taxon>
        <taxon>Magnoliopsida</taxon>
        <taxon>eudicotyledons</taxon>
        <taxon>Gunneridae</taxon>
        <taxon>Pentapetalae</taxon>
        <taxon>rosids</taxon>
        <taxon>malvids</taxon>
        <taxon>Brassicales</taxon>
        <taxon>Brassicaceae</taxon>
        <taxon>Alyssopsideae</taxon>
        <taxon>Olimarabidopsis</taxon>
    </lineage>
</organism>
<proteinExistence type="inferred from homology"/>
<evidence type="ECO:0000250" key="1">
    <source>
        <dbReference type="UniProtKB" id="P19366"/>
    </source>
</evidence>
<evidence type="ECO:0000255" key="2">
    <source>
        <dbReference type="HAMAP-Rule" id="MF_01347"/>
    </source>
</evidence>
<name>ATPB_OLIPU</name>
<geneLocation type="chloroplast"/>
<comment type="function">
    <text evidence="2">Produces ATP from ADP in the presence of a proton gradient across the membrane. The catalytic sites are hosted primarily by the beta subunits.</text>
</comment>
<comment type="catalytic activity">
    <reaction evidence="2">
        <text>ATP + H2O + 4 H(+)(in) = ADP + phosphate + 5 H(+)(out)</text>
        <dbReference type="Rhea" id="RHEA:57720"/>
        <dbReference type="ChEBI" id="CHEBI:15377"/>
        <dbReference type="ChEBI" id="CHEBI:15378"/>
        <dbReference type="ChEBI" id="CHEBI:30616"/>
        <dbReference type="ChEBI" id="CHEBI:43474"/>
        <dbReference type="ChEBI" id="CHEBI:456216"/>
        <dbReference type="EC" id="7.1.2.2"/>
    </reaction>
</comment>
<comment type="subunit">
    <text evidence="2">F-type ATPases have 2 components, CF(1) - the catalytic core - and CF(0) - the membrane proton channel. CF(1) has five subunits: alpha(3), beta(3), gamma(1), delta(1), epsilon(1). CF(0) has four main subunits: a(1), b(1), b'(1) and c(9-12).</text>
</comment>
<comment type="subcellular location">
    <subcellularLocation>
        <location evidence="2">Plastid</location>
        <location evidence="2">Chloroplast thylakoid membrane</location>
        <topology evidence="2">Peripheral membrane protein</topology>
    </subcellularLocation>
</comment>
<comment type="similarity">
    <text evidence="2">Belongs to the ATPase alpha/beta chains family.</text>
</comment>
<reference key="1">
    <citation type="submission" date="2007-03" db="EMBL/GenBank/DDBJ databases">
        <title>Sequence analysis of Arabidopsis pumila JS2 chloroplast DNA.</title>
        <authorList>
            <person name="Hosouchi T."/>
            <person name="Tsuruoka H."/>
            <person name="Kotani H."/>
        </authorList>
    </citation>
    <scope>NUCLEOTIDE SEQUENCE [LARGE SCALE GENOMIC DNA]</scope>
</reference>
<protein>
    <recommendedName>
        <fullName evidence="2">ATP synthase subunit beta, chloroplastic</fullName>
        <ecNumber evidence="2">7.1.2.2</ecNumber>
    </recommendedName>
    <alternativeName>
        <fullName evidence="2">ATP synthase F1 sector subunit beta</fullName>
    </alternativeName>
    <alternativeName>
        <fullName evidence="2">F-ATPase subunit beta</fullName>
    </alternativeName>
</protein>